<feature type="chain" id="PRO_0000346928" description="Putative uncharacterized protein DDB_G0290013">
    <location>
        <begin position="1"/>
        <end position="55"/>
    </location>
</feature>
<proteinExistence type="predicted"/>
<dbReference type="EMBL" id="AAFI02000151">
    <property type="protein sequence ID" value="EAL62412.1"/>
    <property type="molecule type" value="Genomic_DNA"/>
</dbReference>
<dbReference type="RefSeq" id="XP_635913.1">
    <property type="nucleotide sequence ID" value="XM_630821.1"/>
</dbReference>
<dbReference type="PaxDb" id="44689-DDB0188681"/>
<dbReference type="EnsemblProtists" id="EAL62412">
    <property type="protein sequence ID" value="EAL62412"/>
    <property type="gene ID" value="DDB_G0290013"/>
</dbReference>
<dbReference type="GeneID" id="8627435"/>
<dbReference type="KEGG" id="ddi:DDB_G0290013"/>
<dbReference type="dictyBase" id="DDB_G0290013"/>
<dbReference type="HOGENOM" id="CLU_3036387_0_0_1"/>
<dbReference type="InParanoid" id="Q54GP9"/>
<dbReference type="PRO" id="PR:Q54GP9"/>
<dbReference type="Proteomes" id="UP000002195">
    <property type="component" value="Chromosome 5"/>
</dbReference>
<reference key="1">
    <citation type="journal article" date="2005" name="Nature">
        <title>The genome of the social amoeba Dictyostelium discoideum.</title>
        <authorList>
            <person name="Eichinger L."/>
            <person name="Pachebat J.A."/>
            <person name="Gloeckner G."/>
            <person name="Rajandream M.A."/>
            <person name="Sucgang R."/>
            <person name="Berriman M."/>
            <person name="Song J."/>
            <person name="Olsen R."/>
            <person name="Szafranski K."/>
            <person name="Xu Q."/>
            <person name="Tunggal B."/>
            <person name="Kummerfeld S."/>
            <person name="Madera M."/>
            <person name="Konfortov B.A."/>
            <person name="Rivero F."/>
            <person name="Bankier A.T."/>
            <person name="Lehmann R."/>
            <person name="Hamlin N."/>
            <person name="Davies R."/>
            <person name="Gaudet P."/>
            <person name="Fey P."/>
            <person name="Pilcher K."/>
            <person name="Chen G."/>
            <person name="Saunders D."/>
            <person name="Sodergren E.J."/>
            <person name="Davis P."/>
            <person name="Kerhornou A."/>
            <person name="Nie X."/>
            <person name="Hall N."/>
            <person name="Anjard C."/>
            <person name="Hemphill L."/>
            <person name="Bason N."/>
            <person name="Farbrother P."/>
            <person name="Desany B."/>
            <person name="Just E."/>
            <person name="Morio T."/>
            <person name="Rost R."/>
            <person name="Churcher C.M."/>
            <person name="Cooper J."/>
            <person name="Haydock S."/>
            <person name="van Driessche N."/>
            <person name="Cronin A."/>
            <person name="Goodhead I."/>
            <person name="Muzny D.M."/>
            <person name="Mourier T."/>
            <person name="Pain A."/>
            <person name="Lu M."/>
            <person name="Harper D."/>
            <person name="Lindsay R."/>
            <person name="Hauser H."/>
            <person name="James K.D."/>
            <person name="Quiles M."/>
            <person name="Madan Babu M."/>
            <person name="Saito T."/>
            <person name="Buchrieser C."/>
            <person name="Wardroper A."/>
            <person name="Felder M."/>
            <person name="Thangavelu M."/>
            <person name="Johnson D."/>
            <person name="Knights A."/>
            <person name="Loulseged H."/>
            <person name="Mungall K.L."/>
            <person name="Oliver K."/>
            <person name="Price C."/>
            <person name="Quail M.A."/>
            <person name="Urushihara H."/>
            <person name="Hernandez J."/>
            <person name="Rabbinowitsch E."/>
            <person name="Steffen D."/>
            <person name="Sanders M."/>
            <person name="Ma J."/>
            <person name="Kohara Y."/>
            <person name="Sharp S."/>
            <person name="Simmonds M.N."/>
            <person name="Spiegler S."/>
            <person name="Tivey A."/>
            <person name="Sugano S."/>
            <person name="White B."/>
            <person name="Walker D."/>
            <person name="Woodward J.R."/>
            <person name="Winckler T."/>
            <person name="Tanaka Y."/>
            <person name="Shaulsky G."/>
            <person name="Schleicher M."/>
            <person name="Weinstock G.M."/>
            <person name="Rosenthal A."/>
            <person name="Cox E.C."/>
            <person name="Chisholm R.L."/>
            <person name="Gibbs R.A."/>
            <person name="Loomis W.F."/>
            <person name="Platzer M."/>
            <person name="Kay R.R."/>
            <person name="Williams J.G."/>
            <person name="Dear P.H."/>
            <person name="Noegel A.A."/>
            <person name="Barrell B.G."/>
            <person name="Kuspa A."/>
        </authorList>
    </citation>
    <scope>NUCLEOTIDE SEQUENCE [LARGE SCALE GENOMIC DNA]</scope>
    <source>
        <strain>AX4</strain>
    </source>
</reference>
<protein>
    <recommendedName>
        <fullName>Putative uncharacterized protein DDB_G0290013</fullName>
    </recommendedName>
</protein>
<gene>
    <name type="ORF">DDB_G0290013</name>
</gene>
<name>Y8681_DICDI</name>
<accession>Q54GP9</accession>
<keyword id="KW-1185">Reference proteome</keyword>
<organism>
    <name type="scientific">Dictyostelium discoideum</name>
    <name type="common">Social amoeba</name>
    <dbReference type="NCBI Taxonomy" id="44689"/>
    <lineage>
        <taxon>Eukaryota</taxon>
        <taxon>Amoebozoa</taxon>
        <taxon>Evosea</taxon>
        <taxon>Eumycetozoa</taxon>
        <taxon>Dictyostelia</taxon>
        <taxon>Dictyosteliales</taxon>
        <taxon>Dictyosteliaceae</taxon>
        <taxon>Dictyostelium</taxon>
    </lineage>
</organism>
<sequence length="55" mass="6241">MLSKSLISKSLLFNSNNNNNTINESSIIIVQTQLNTITNKSTTSTFYYTRPQWGL</sequence>